<accession>P9WGP8</accession>
<accession>F2GNY3</accession>
<accession>L0TEA6</accession>
<accession>O53302</accession>
<accession>Q7D656</accession>
<organism>
    <name type="scientific">Mycobacterium tuberculosis (strain CDC 1551 / Oshkosh)</name>
    <dbReference type="NCBI Taxonomy" id="83331"/>
    <lineage>
        <taxon>Bacteria</taxon>
        <taxon>Bacillati</taxon>
        <taxon>Actinomycetota</taxon>
        <taxon>Actinomycetes</taxon>
        <taxon>Mycobacteriales</taxon>
        <taxon>Mycobacteriaceae</taxon>
        <taxon>Mycobacterium</taxon>
        <taxon>Mycobacterium tuberculosis complex</taxon>
    </lineage>
</organism>
<feature type="chain" id="PRO_0000428324" description="Putative oxidoreductase SadH">
    <location>
        <begin position="1"/>
        <end position="276"/>
    </location>
</feature>
<feature type="active site" description="Proton acceptor" evidence="2">
    <location>
        <position position="155"/>
    </location>
</feature>
<feature type="binding site" evidence="1">
    <location>
        <position position="142"/>
    </location>
    <ligand>
        <name>substrate</name>
    </ligand>
</feature>
<comment type="function">
    <text evidence="1">Required for maintaining the appropriate mycolic acid composition and permeability of the envelope on its exposure to acidic pH.</text>
</comment>
<comment type="similarity">
    <text evidence="3">Belongs to the short-chain dehydrogenases/reductases (SDR) family.</text>
</comment>
<evidence type="ECO:0000250" key="1"/>
<evidence type="ECO:0000255" key="2">
    <source>
        <dbReference type="PROSITE-ProRule" id="PRU10001"/>
    </source>
</evidence>
<evidence type="ECO:0000305" key="3"/>
<protein>
    <recommendedName>
        <fullName>Putative oxidoreductase SadH</fullName>
        <ecNumber>1.-.-.-</ecNumber>
    </recommendedName>
</protein>
<sequence length="276" mass="29217">MSSFEGKVAVITGAGSGIGRALALNLSEKRAKLALSDVDTDGLAKTVRLAQALGAQVKSDRLDVAEREAVLAHADAVVAHFGTVHQVYNNAGIAYNGNVDKSEFKDIERIIDVDFWGVVNGTKAFLPHVIASGDGHIVNISSLFGLIAVPGQSAYNAAKFAVRGFTEALRQEMLVARHPVKVTCVHPGGIKTAVARNATVADGEDQQTFAEFFDRRLALHSPEMAAKTIVNGVAKGQARVVVGLEAKAVDVLARIMGSSYQRLVAAGVAKFFPWAK</sequence>
<reference key="1">
    <citation type="journal article" date="2002" name="J. Bacteriol.">
        <title>Whole-genome comparison of Mycobacterium tuberculosis clinical and laboratory strains.</title>
        <authorList>
            <person name="Fleischmann R.D."/>
            <person name="Alland D."/>
            <person name="Eisen J.A."/>
            <person name="Carpenter L."/>
            <person name="White O."/>
            <person name="Peterson J.D."/>
            <person name="DeBoy R.T."/>
            <person name="Dodson R.J."/>
            <person name="Gwinn M.L."/>
            <person name="Haft D.H."/>
            <person name="Hickey E.K."/>
            <person name="Kolonay J.F."/>
            <person name="Nelson W.C."/>
            <person name="Umayam L.A."/>
            <person name="Ermolaeva M.D."/>
            <person name="Salzberg S.L."/>
            <person name="Delcher A."/>
            <person name="Utterback T.R."/>
            <person name="Weidman J.F."/>
            <person name="Khouri H.M."/>
            <person name="Gill J."/>
            <person name="Mikula A."/>
            <person name="Bishai W."/>
            <person name="Jacobs W.R. Jr."/>
            <person name="Venter J.C."/>
            <person name="Fraser C.M."/>
        </authorList>
    </citation>
    <scope>NUCLEOTIDE SEQUENCE [LARGE SCALE GENOMIC DNA]</scope>
    <source>
        <strain>CDC 1551 / Oshkosh</strain>
    </source>
</reference>
<gene>
    <name type="primary">sadH</name>
    <name type="ordered locus">MT3170</name>
</gene>
<keyword id="KW-0560">Oxidoreductase</keyword>
<keyword id="KW-1185">Reference proteome</keyword>
<proteinExistence type="inferred from homology"/>
<dbReference type="EC" id="1.-.-.-"/>
<dbReference type="EMBL" id="AE000516">
    <property type="protein sequence ID" value="AAK47506.1"/>
    <property type="molecule type" value="Genomic_DNA"/>
</dbReference>
<dbReference type="PIR" id="A70853">
    <property type="entry name" value="A70853"/>
</dbReference>
<dbReference type="RefSeq" id="WP_003416074.1">
    <property type="nucleotide sequence ID" value="NZ_KK341227.1"/>
</dbReference>
<dbReference type="SMR" id="P9WGP8"/>
<dbReference type="KEGG" id="mtc:MT3170"/>
<dbReference type="PATRIC" id="fig|83331.31.peg.3416"/>
<dbReference type="HOGENOM" id="CLU_010194_2_1_11"/>
<dbReference type="Proteomes" id="UP000001020">
    <property type="component" value="Chromosome"/>
</dbReference>
<dbReference type="GO" id="GO:0016491">
    <property type="term" value="F:oxidoreductase activity"/>
    <property type="evidence" value="ECO:0007669"/>
    <property type="project" value="UniProtKB-KW"/>
</dbReference>
<dbReference type="FunFam" id="3.40.50.720:FF:000466">
    <property type="entry name" value="Probable short-chain type dehydrogenase/reductase"/>
    <property type="match status" value="1"/>
</dbReference>
<dbReference type="Gene3D" id="3.40.50.720">
    <property type="entry name" value="NAD(P)-binding Rossmann-like Domain"/>
    <property type="match status" value="1"/>
</dbReference>
<dbReference type="InterPro" id="IPR036291">
    <property type="entry name" value="NAD(P)-bd_dom_sf"/>
</dbReference>
<dbReference type="InterPro" id="IPR020904">
    <property type="entry name" value="Sc_DH/Rdtase_CS"/>
</dbReference>
<dbReference type="InterPro" id="IPR002347">
    <property type="entry name" value="SDR_fam"/>
</dbReference>
<dbReference type="PANTHER" id="PTHR43391:SF82">
    <property type="entry name" value="OXIDOREDUCTASE SADH-RELATED"/>
    <property type="match status" value="1"/>
</dbReference>
<dbReference type="PANTHER" id="PTHR43391">
    <property type="entry name" value="RETINOL DEHYDROGENASE-RELATED"/>
    <property type="match status" value="1"/>
</dbReference>
<dbReference type="Pfam" id="PF00106">
    <property type="entry name" value="adh_short"/>
    <property type="match status" value="1"/>
</dbReference>
<dbReference type="PRINTS" id="PR00081">
    <property type="entry name" value="GDHRDH"/>
</dbReference>
<dbReference type="PRINTS" id="PR00080">
    <property type="entry name" value="SDRFAMILY"/>
</dbReference>
<dbReference type="SMART" id="SM00822">
    <property type="entry name" value="PKS_KR"/>
    <property type="match status" value="1"/>
</dbReference>
<dbReference type="SUPFAM" id="SSF51735">
    <property type="entry name" value="NAD(P)-binding Rossmann-fold domains"/>
    <property type="match status" value="1"/>
</dbReference>
<dbReference type="PROSITE" id="PS00061">
    <property type="entry name" value="ADH_SHORT"/>
    <property type="match status" value="1"/>
</dbReference>
<name>SADH_MYCTO</name>